<feature type="chain" id="PRO_0000109211" description="UDP-N-acetylglucosamine--N-acetylmuramyl-(pentapeptide) pyrophosphoryl-undecaprenol N-acetylglucosamine transferase">
    <location>
        <begin position="1"/>
        <end position="356"/>
    </location>
</feature>
<feature type="binding site" evidence="1">
    <location>
        <position position="166"/>
    </location>
    <ligand>
        <name>UDP-N-acetyl-alpha-D-glucosamine</name>
        <dbReference type="ChEBI" id="CHEBI:57705"/>
    </ligand>
</feature>
<feature type="binding site" evidence="1">
    <location>
        <position position="196"/>
    </location>
    <ligand>
        <name>UDP-N-acetyl-alpha-D-glucosamine</name>
        <dbReference type="ChEBI" id="CHEBI:57705"/>
    </ligand>
</feature>
<feature type="binding site" evidence="1">
    <location>
        <position position="290"/>
    </location>
    <ligand>
        <name>UDP-N-acetyl-alpha-D-glucosamine</name>
        <dbReference type="ChEBI" id="CHEBI:57705"/>
    </ligand>
</feature>
<keyword id="KW-0131">Cell cycle</keyword>
<keyword id="KW-0132">Cell division</keyword>
<keyword id="KW-1003">Cell membrane</keyword>
<keyword id="KW-0133">Cell shape</keyword>
<keyword id="KW-0961">Cell wall biogenesis/degradation</keyword>
<keyword id="KW-0328">Glycosyltransferase</keyword>
<keyword id="KW-0472">Membrane</keyword>
<keyword id="KW-0573">Peptidoglycan synthesis</keyword>
<keyword id="KW-0808">Transferase</keyword>
<dbReference type="EC" id="2.4.1.227" evidence="1"/>
<dbReference type="EMBL" id="BA000017">
    <property type="protein sequence ID" value="BAB57580.1"/>
    <property type="molecule type" value="Genomic_DNA"/>
</dbReference>
<dbReference type="RefSeq" id="WP_000160906.1">
    <property type="nucleotide sequence ID" value="NC_002758.2"/>
</dbReference>
<dbReference type="SMR" id="P65481"/>
<dbReference type="CAZy" id="GT28">
    <property type="family name" value="Glycosyltransferase Family 28"/>
</dbReference>
<dbReference type="KEGG" id="sav:SAV1418"/>
<dbReference type="HOGENOM" id="CLU_037404_0_0_9"/>
<dbReference type="PhylomeDB" id="P65481"/>
<dbReference type="UniPathway" id="UPA00219"/>
<dbReference type="Proteomes" id="UP000002481">
    <property type="component" value="Chromosome"/>
</dbReference>
<dbReference type="GO" id="GO:0005886">
    <property type="term" value="C:plasma membrane"/>
    <property type="evidence" value="ECO:0007669"/>
    <property type="project" value="UniProtKB-SubCell"/>
</dbReference>
<dbReference type="GO" id="GO:0050511">
    <property type="term" value="F:undecaprenyldiphospho-muramoylpentapeptide beta-N-acetylglucosaminyltransferase activity"/>
    <property type="evidence" value="ECO:0007669"/>
    <property type="project" value="UniProtKB-UniRule"/>
</dbReference>
<dbReference type="GO" id="GO:0005975">
    <property type="term" value="P:carbohydrate metabolic process"/>
    <property type="evidence" value="ECO:0007669"/>
    <property type="project" value="InterPro"/>
</dbReference>
<dbReference type="GO" id="GO:0051301">
    <property type="term" value="P:cell division"/>
    <property type="evidence" value="ECO:0007669"/>
    <property type="project" value="UniProtKB-KW"/>
</dbReference>
<dbReference type="GO" id="GO:0071555">
    <property type="term" value="P:cell wall organization"/>
    <property type="evidence" value="ECO:0007669"/>
    <property type="project" value="UniProtKB-KW"/>
</dbReference>
<dbReference type="GO" id="GO:0030259">
    <property type="term" value="P:lipid glycosylation"/>
    <property type="evidence" value="ECO:0007669"/>
    <property type="project" value="UniProtKB-UniRule"/>
</dbReference>
<dbReference type="GO" id="GO:0009252">
    <property type="term" value="P:peptidoglycan biosynthetic process"/>
    <property type="evidence" value="ECO:0007669"/>
    <property type="project" value="UniProtKB-UniRule"/>
</dbReference>
<dbReference type="GO" id="GO:0008360">
    <property type="term" value="P:regulation of cell shape"/>
    <property type="evidence" value="ECO:0007669"/>
    <property type="project" value="UniProtKB-KW"/>
</dbReference>
<dbReference type="CDD" id="cd03785">
    <property type="entry name" value="GT28_MurG"/>
    <property type="match status" value="1"/>
</dbReference>
<dbReference type="Gene3D" id="3.40.50.2000">
    <property type="entry name" value="Glycogen Phosphorylase B"/>
    <property type="match status" value="2"/>
</dbReference>
<dbReference type="HAMAP" id="MF_00033">
    <property type="entry name" value="MurG"/>
    <property type="match status" value="1"/>
</dbReference>
<dbReference type="InterPro" id="IPR006009">
    <property type="entry name" value="GlcNAc_MurG"/>
</dbReference>
<dbReference type="InterPro" id="IPR007235">
    <property type="entry name" value="Glyco_trans_28_C"/>
</dbReference>
<dbReference type="InterPro" id="IPR004276">
    <property type="entry name" value="GlycoTrans_28_N"/>
</dbReference>
<dbReference type="NCBIfam" id="NF009102">
    <property type="entry name" value="PRK12446.1"/>
    <property type="match status" value="1"/>
</dbReference>
<dbReference type="PANTHER" id="PTHR21015:SF27">
    <property type="entry name" value="UDP-N-ACETYLGLUCOSAMINE--N-ACETYLMURAMYL-(PENTAPEPTIDE) PYROPHOSPHORYL-UNDECAPRENOL N-ACETYLGLUCOSAMINE TRANSFERASE"/>
    <property type="match status" value="1"/>
</dbReference>
<dbReference type="PANTHER" id="PTHR21015">
    <property type="entry name" value="UDP-N-ACETYLGLUCOSAMINE--N-ACETYLMURAMYL-(PENTAPEPTIDE) PYROPHOSPHORYL-UNDECAPRENOL N-ACETYLGLUCOSAMINE TRANSFERASE 1"/>
    <property type="match status" value="1"/>
</dbReference>
<dbReference type="Pfam" id="PF04101">
    <property type="entry name" value="Glyco_tran_28_C"/>
    <property type="match status" value="1"/>
</dbReference>
<dbReference type="Pfam" id="PF03033">
    <property type="entry name" value="Glyco_transf_28"/>
    <property type="match status" value="1"/>
</dbReference>
<dbReference type="SUPFAM" id="SSF53756">
    <property type="entry name" value="UDP-Glycosyltransferase/glycogen phosphorylase"/>
    <property type="match status" value="1"/>
</dbReference>
<name>MURG_STAAM</name>
<protein>
    <recommendedName>
        <fullName evidence="1">UDP-N-acetylglucosamine--N-acetylmuramyl-(pentapeptide) pyrophosphoryl-undecaprenol N-acetylglucosamine transferase</fullName>
        <ecNumber evidence="1">2.4.1.227</ecNumber>
    </recommendedName>
    <alternativeName>
        <fullName evidence="1">Undecaprenyl-PP-MurNAc-pentapeptide-UDPGlcNAc GlcNAc transferase</fullName>
    </alternativeName>
</protein>
<reference key="1">
    <citation type="journal article" date="2001" name="Lancet">
        <title>Whole genome sequencing of meticillin-resistant Staphylococcus aureus.</title>
        <authorList>
            <person name="Kuroda M."/>
            <person name="Ohta T."/>
            <person name="Uchiyama I."/>
            <person name="Baba T."/>
            <person name="Yuzawa H."/>
            <person name="Kobayashi I."/>
            <person name="Cui L."/>
            <person name="Oguchi A."/>
            <person name="Aoki K."/>
            <person name="Nagai Y."/>
            <person name="Lian J.-Q."/>
            <person name="Ito T."/>
            <person name="Kanamori M."/>
            <person name="Matsumaru H."/>
            <person name="Maruyama A."/>
            <person name="Murakami H."/>
            <person name="Hosoyama A."/>
            <person name="Mizutani-Ui Y."/>
            <person name="Takahashi N.K."/>
            <person name="Sawano T."/>
            <person name="Inoue R."/>
            <person name="Kaito C."/>
            <person name="Sekimizu K."/>
            <person name="Hirakawa H."/>
            <person name="Kuhara S."/>
            <person name="Goto S."/>
            <person name="Yabuzaki J."/>
            <person name="Kanehisa M."/>
            <person name="Yamashita A."/>
            <person name="Oshima K."/>
            <person name="Furuya K."/>
            <person name="Yoshino C."/>
            <person name="Shiba T."/>
            <person name="Hattori M."/>
            <person name="Ogasawara N."/>
            <person name="Hayashi H."/>
            <person name="Hiramatsu K."/>
        </authorList>
    </citation>
    <scope>NUCLEOTIDE SEQUENCE [LARGE SCALE GENOMIC DNA]</scope>
    <source>
        <strain>Mu50 / ATCC 700699</strain>
    </source>
</reference>
<sequence length="356" mass="39727">MTKIAFTGGGTVGHVSVNLSLIPTALSQGYEALYIGSKNGIEREMIESQLPEIKYYPISSGKLRRYISLENAKDVFKVLKGILDARKVLKKEKPDLLFSKGGFVSVPVVIAAKSLNIPTIIHESDLTPGLANKIALKFAKKIYTTFEETLNYLPKEKADFIGATIREDLKNGNAHNGYQLTGFNENKKVLLVMGGSLGSKKLNSIIRENLDALLQQYQVIHLTGKGLKDAQVKKSGYIQYEFVKEDLTDLLAITDTVISRAGSNAIYEFLTLRIPMLLVPLGLDQSRGDQIDNANHFADKGYAKTIDEEQLTAQILLQELNEMEQERTRIINNMKSYEQSYTKEALFDKMIKDALN</sequence>
<accession>P65481</accession>
<accession>Q99U69</accession>
<proteinExistence type="inferred from homology"/>
<organism>
    <name type="scientific">Staphylococcus aureus (strain Mu50 / ATCC 700699)</name>
    <dbReference type="NCBI Taxonomy" id="158878"/>
    <lineage>
        <taxon>Bacteria</taxon>
        <taxon>Bacillati</taxon>
        <taxon>Bacillota</taxon>
        <taxon>Bacilli</taxon>
        <taxon>Bacillales</taxon>
        <taxon>Staphylococcaceae</taxon>
        <taxon>Staphylococcus</taxon>
    </lineage>
</organism>
<evidence type="ECO:0000255" key="1">
    <source>
        <dbReference type="HAMAP-Rule" id="MF_00033"/>
    </source>
</evidence>
<comment type="function">
    <text evidence="1">Cell wall formation. Catalyzes the transfer of a GlcNAc subunit on undecaprenyl-pyrophosphoryl-MurNAc-pentapeptide (lipid intermediate I) to form undecaprenyl-pyrophosphoryl-MurNAc-(pentapeptide)GlcNAc (lipid intermediate II).</text>
</comment>
<comment type="catalytic activity">
    <reaction evidence="1">
        <text>Mur2Ac(oyl-L-Ala-gamma-D-Glu-L-Lys-D-Ala-D-Ala)-di-trans,octa-cis-undecaprenyl diphosphate + UDP-N-acetyl-alpha-D-glucosamine = beta-D-GlcNAc-(1-&gt;4)-Mur2Ac(oyl-L-Ala-gamma-D-Glu-L-Lys-D-Ala-D-Ala)-di-trans,octa-cis-undecaprenyl diphosphate + UDP + H(+)</text>
        <dbReference type="Rhea" id="RHEA:23192"/>
        <dbReference type="ChEBI" id="CHEBI:15378"/>
        <dbReference type="ChEBI" id="CHEBI:57705"/>
        <dbReference type="ChEBI" id="CHEBI:58223"/>
        <dbReference type="ChEBI" id="CHEBI:60032"/>
        <dbReference type="ChEBI" id="CHEBI:60033"/>
        <dbReference type="EC" id="2.4.1.227"/>
    </reaction>
</comment>
<comment type="pathway">
    <text evidence="1">Cell wall biogenesis; peptidoglycan biosynthesis.</text>
</comment>
<comment type="subcellular location">
    <subcellularLocation>
        <location evidence="1">Cell membrane</location>
        <topology evidence="1">Peripheral membrane protein</topology>
        <orientation evidence="1">Cytoplasmic side</orientation>
    </subcellularLocation>
</comment>
<comment type="similarity">
    <text evidence="1">Belongs to the glycosyltransferase 28 family. MurG subfamily.</text>
</comment>
<gene>
    <name evidence="1" type="primary">murG</name>
    <name type="ordered locus">SAV1418</name>
</gene>